<gene>
    <name evidence="1" type="primary">dapB</name>
    <name type="ordered locus">BCE33L1415</name>
</gene>
<protein>
    <recommendedName>
        <fullName evidence="1">4-hydroxy-tetrahydrodipicolinate reductase</fullName>
        <shortName evidence="1">HTPA reductase</shortName>
        <ecNumber evidence="1">1.17.1.8</ecNumber>
    </recommendedName>
</protein>
<proteinExistence type="inferred from homology"/>
<evidence type="ECO:0000255" key="1">
    <source>
        <dbReference type="HAMAP-Rule" id="MF_00102"/>
    </source>
</evidence>
<evidence type="ECO:0000305" key="2"/>
<organism>
    <name type="scientific">Bacillus cereus (strain ZK / E33L)</name>
    <dbReference type="NCBI Taxonomy" id="288681"/>
    <lineage>
        <taxon>Bacteria</taxon>
        <taxon>Bacillati</taxon>
        <taxon>Bacillota</taxon>
        <taxon>Bacilli</taxon>
        <taxon>Bacillales</taxon>
        <taxon>Bacillaceae</taxon>
        <taxon>Bacillus</taxon>
        <taxon>Bacillus cereus group</taxon>
    </lineage>
</organism>
<keyword id="KW-0028">Amino-acid biosynthesis</keyword>
<keyword id="KW-0963">Cytoplasm</keyword>
<keyword id="KW-0220">Diaminopimelate biosynthesis</keyword>
<keyword id="KW-0457">Lysine biosynthesis</keyword>
<keyword id="KW-0520">NAD</keyword>
<keyword id="KW-0521">NADP</keyword>
<keyword id="KW-0560">Oxidoreductase</keyword>
<comment type="function">
    <text evidence="1">Catalyzes the conversion of 4-hydroxy-tetrahydrodipicolinate (HTPA) to tetrahydrodipicolinate.</text>
</comment>
<comment type="catalytic activity">
    <reaction evidence="1">
        <text>(S)-2,3,4,5-tetrahydrodipicolinate + NAD(+) + H2O = (2S,4S)-4-hydroxy-2,3,4,5-tetrahydrodipicolinate + NADH + H(+)</text>
        <dbReference type="Rhea" id="RHEA:35323"/>
        <dbReference type="ChEBI" id="CHEBI:15377"/>
        <dbReference type="ChEBI" id="CHEBI:15378"/>
        <dbReference type="ChEBI" id="CHEBI:16845"/>
        <dbReference type="ChEBI" id="CHEBI:57540"/>
        <dbReference type="ChEBI" id="CHEBI:57945"/>
        <dbReference type="ChEBI" id="CHEBI:67139"/>
        <dbReference type="EC" id="1.17.1.8"/>
    </reaction>
</comment>
<comment type="catalytic activity">
    <reaction evidence="1">
        <text>(S)-2,3,4,5-tetrahydrodipicolinate + NADP(+) + H2O = (2S,4S)-4-hydroxy-2,3,4,5-tetrahydrodipicolinate + NADPH + H(+)</text>
        <dbReference type="Rhea" id="RHEA:35331"/>
        <dbReference type="ChEBI" id="CHEBI:15377"/>
        <dbReference type="ChEBI" id="CHEBI:15378"/>
        <dbReference type="ChEBI" id="CHEBI:16845"/>
        <dbReference type="ChEBI" id="CHEBI:57783"/>
        <dbReference type="ChEBI" id="CHEBI:58349"/>
        <dbReference type="ChEBI" id="CHEBI:67139"/>
        <dbReference type="EC" id="1.17.1.8"/>
    </reaction>
</comment>
<comment type="pathway">
    <text evidence="1">Amino-acid biosynthesis; L-lysine biosynthesis via DAP pathway; (S)-tetrahydrodipicolinate from L-aspartate: step 4/4.</text>
</comment>
<comment type="subcellular location">
    <subcellularLocation>
        <location evidence="1">Cytoplasm</location>
    </subcellularLocation>
</comment>
<comment type="similarity">
    <text evidence="1">Belongs to the DapB family.</text>
</comment>
<comment type="caution">
    <text evidence="2">Was originally thought to be a dihydrodipicolinate reductase (DHDPR), catalyzing the conversion of dihydrodipicolinate to tetrahydrodipicolinate. However, it was shown in E.coli that the substrate of the enzymatic reaction is not dihydrodipicolinate (DHDP) but in fact (2S,4S)-4-hydroxy-2,3,4,5-tetrahydrodipicolinic acid (HTPA), the product released by the DapA-catalyzed reaction.</text>
</comment>
<dbReference type="EC" id="1.17.1.8" evidence="1"/>
<dbReference type="EMBL" id="CP000001">
    <property type="protein sequence ID" value="AAU18835.1"/>
    <property type="molecule type" value="Genomic_DNA"/>
</dbReference>
<dbReference type="RefSeq" id="WP_000658798.1">
    <property type="nucleotide sequence ID" value="NC_006274.1"/>
</dbReference>
<dbReference type="SMR" id="Q63DK0"/>
<dbReference type="KEGG" id="bcz:BCE33L1415"/>
<dbReference type="PATRIC" id="fig|288681.22.peg.4138"/>
<dbReference type="UniPathway" id="UPA00034">
    <property type="reaction ID" value="UER00018"/>
</dbReference>
<dbReference type="Proteomes" id="UP000002612">
    <property type="component" value="Chromosome"/>
</dbReference>
<dbReference type="GO" id="GO:0005829">
    <property type="term" value="C:cytosol"/>
    <property type="evidence" value="ECO:0007669"/>
    <property type="project" value="TreeGrafter"/>
</dbReference>
<dbReference type="GO" id="GO:0008839">
    <property type="term" value="F:4-hydroxy-tetrahydrodipicolinate reductase"/>
    <property type="evidence" value="ECO:0007669"/>
    <property type="project" value="UniProtKB-EC"/>
</dbReference>
<dbReference type="GO" id="GO:0051287">
    <property type="term" value="F:NAD binding"/>
    <property type="evidence" value="ECO:0007669"/>
    <property type="project" value="UniProtKB-UniRule"/>
</dbReference>
<dbReference type="GO" id="GO:0050661">
    <property type="term" value="F:NADP binding"/>
    <property type="evidence" value="ECO:0007669"/>
    <property type="project" value="UniProtKB-UniRule"/>
</dbReference>
<dbReference type="GO" id="GO:0016726">
    <property type="term" value="F:oxidoreductase activity, acting on CH or CH2 groups, NAD or NADP as acceptor"/>
    <property type="evidence" value="ECO:0007669"/>
    <property type="project" value="UniProtKB-UniRule"/>
</dbReference>
<dbReference type="GO" id="GO:0019877">
    <property type="term" value="P:diaminopimelate biosynthetic process"/>
    <property type="evidence" value="ECO:0007669"/>
    <property type="project" value="UniProtKB-UniRule"/>
</dbReference>
<dbReference type="GO" id="GO:0009089">
    <property type="term" value="P:lysine biosynthetic process via diaminopimelate"/>
    <property type="evidence" value="ECO:0007669"/>
    <property type="project" value="UniProtKB-UniRule"/>
</dbReference>
<dbReference type="CDD" id="cd02274">
    <property type="entry name" value="DHDPR_N"/>
    <property type="match status" value="1"/>
</dbReference>
<dbReference type="FunFam" id="3.30.360.10:FF:000009">
    <property type="entry name" value="4-hydroxy-tetrahydrodipicolinate reductase"/>
    <property type="match status" value="1"/>
</dbReference>
<dbReference type="FunFam" id="3.40.50.720:FF:000180">
    <property type="entry name" value="4-hydroxy-tetrahydrodipicolinate reductase"/>
    <property type="match status" value="1"/>
</dbReference>
<dbReference type="Gene3D" id="3.30.360.10">
    <property type="entry name" value="Dihydrodipicolinate Reductase, domain 2"/>
    <property type="match status" value="1"/>
</dbReference>
<dbReference type="Gene3D" id="3.40.50.720">
    <property type="entry name" value="NAD(P)-binding Rossmann-like Domain"/>
    <property type="match status" value="1"/>
</dbReference>
<dbReference type="HAMAP" id="MF_00102">
    <property type="entry name" value="DapB"/>
    <property type="match status" value="1"/>
</dbReference>
<dbReference type="InterPro" id="IPR022663">
    <property type="entry name" value="DapB_C"/>
</dbReference>
<dbReference type="InterPro" id="IPR000846">
    <property type="entry name" value="DapB_N"/>
</dbReference>
<dbReference type="InterPro" id="IPR022664">
    <property type="entry name" value="DapB_N_CS"/>
</dbReference>
<dbReference type="InterPro" id="IPR023940">
    <property type="entry name" value="DHDPR_bac"/>
</dbReference>
<dbReference type="InterPro" id="IPR036291">
    <property type="entry name" value="NAD(P)-bd_dom_sf"/>
</dbReference>
<dbReference type="NCBIfam" id="TIGR00036">
    <property type="entry name" value="dapB"/>
    <property type="match status" value="1"/>
</dbReference>
<dbReference type="PANTHER" id="PTHR20836:SF0">
    <property type="entry name" value="4-HYDROXY-TETRAHYDRODIPICOLINATE REDUCTASE 1, CHLOROPLASTIC-RELATED"/>
    <property type="match status" value="1"/>
</dbReference>
<dbReference type="PANTHER" id="PTHR20836">
    <property type="entry name" value="DIHYDRODIPICOLINATE REDUCTASE"/>
    <property type="match status" value="1"/>
</dbReference>
<dbReference type="Pfam" id="PF05173">
    <property type="entry name" value="DapB_C"/>
    <property type="match status" value="1"/>
</dbReference>
<dbReference type="Pfam" id="PF01113">
    <property type="entry name" value="DapB_N"/>
    <property type="match status" value="1"/>
</dbReference>
<dbReference type="PIRSF" id="PIRSF000161">
    <property type="entry name" value="DHPR"/>
    <property type="match status" value="1"/>
</dbReference>
<dbReference type="SUPFAM" id="SSF55347">
    <property type="entry name" value="Glyceraldehyde-3-phosphate dehydrogenase-like, C-terminal domain"/>
    <property type="match status" value="1"/>
</dbReference>
<dbReference type="SUPFAM" id="SSF51735">
    <property type="entry name" value="NAD(P)-binding Rossmann-fold domains"/>
    <property type="match status" value="1"/>
</dbReference>
<dbReference type="PROSITE" id="PS01298">
    <property type="entry name" value="DAPB"/>
    <property type="match status" value="1"/>
</dbReference>
<sequence length="266" mass="29246">MKEIKVIIAGPRGRMGHEAVLLMERTEHFNLVAAVDYKHGGEKISDLPGMPALDAPIYADLHTCLEEVEADVLLDLTTPEVGKQHVTLAVERGLRSVIGTTGFTEEELKQLTEIAKEKAVGTIIAPNFAIGAVLMMKFSQMAAKYFQDVEVIELHHDQKLDAPSGTAVKTVELIRQNRESKQQGHPNEVEQLEGARGANVDGIHIHSVRLPGLIAHQEVMFGGDGQMLTVRHDSFNRASFMSGVKLSIETVMNLDHLVYGLENIID</sequence>
<name>DAPB_BACCZ</name>
<accession>Q63DK0</accession>
<feature type="chain" id="PRO_0000228322" description="4-hydroxy-tetrahydrodipicolinate reductase">
    <location>
        <begin position="1"/>
        <end position="266"/>
    </location>
</feature>
<feature type="active site" description="Proton donor/acceptor" evidence="1">
    <location>
        <position position="155"/>
    </location>
</feature>
<feature type="active site" description="Proton donor" evidence="1">
    <location>
        <position position="159"/>
    </location>
</feature>
<feature type="binding site" evidence="1">
    <location>
        <begin position="10"/>
        <end position="15"/>
    </location>
    <ligand>
        <name>NAD(+)</name>
        <dbReference type="ChEBI" id="CHEBI:57540"/>
    </ligand>
</feature>
<feature type="binding site" evidence="1">
    <location>
        <position position="38"/>
    </location>
    <ligand>
        <name>NADP(+)</name>
        <dbReference type="ChEBI" id="CHEBI:58349"/>
    </ligand>
</feature>
<feature type="binding site" evidence="1">
    <location>
        <begin position="99"/>
        <end position="101"/>
    </location>
    <ligand>
        <name>NAD(+)</name>
        <dbReference type="ChEBI" id="CHEBI:57540"/>
    </ligand>
</feature>
<feature type="binding site" evidence="1">
    <location>
        <begin position="125"/>
        <end position="128"/>
    </location>
    <ligand>
        <name>NAD(+)</name>
        <dbReference type="ChEBI" id="CHEBI:57540"/>
    </ligand>
</feature>
<feature type="binding site" evidence="1">
    <location>
        <position position="156"/>
    </location>
    <ligand>
        <name>(S)-2,3,4,5-tetrahydrodipicolinate</name>
        <dbReference type="ChEBI" id="CHEBI:16845"/>
    </ligand>
</feature>
<feature type="binding site" evidence="1">
    <location>
        <begin position="165"/>
        <end position="166"/>
    </location>
    <ligand>
        <name>(S)-2,3,4,5-tetrahydrodipicolinate</name>
        <dbReference type="ChEBI" id="CHEBI:16845"/>
    </ligand>
</feature>
<reference key="1">
    <citation type="journal article" date="2006" name="J. Bacteriol.">
        <title>Pathogenomic sequence analysis of Bacillus cereus and Bacillus thuringiensis isolates closely related to Bacillus anthracis.</title>
        <authorList>
            <person name="Han C.S."/>
            <person name="Xie G."/>
            <person name="Challacombe J.F."/>
            <person name="Altherr M.R."/>
            <person name="Bhotika S.S."/>
            <person name="Bruce D."/>
            <person name="Campbell C.S."/>
            <person name="Campbell M.L."/>
            <person name="Chen J."/>
            <person name="Chertkov O."/>
            <person name="Cleland C."/>
            <person name="Dimitrijevic M."/>
            <person name="Doggett N.A."/>
            <person name="Fawcett J.J."/>
            <person name="Glavina T."/>
            <person name="Goodwin L.A."/>
            <person name="Hill K.K."/>
            <person name="Hitchcock P."/>
            <person name="Jackson P.J."/>
            <person name="Keim P."/>
            <person name="Kewalramani A.R."/>
            <person name="Longmire J."/>
            <person name="Lucas S."/>
            <person name="Malfatti S."/>
            <person name="McMurry K."/>
            <person name="Meincke L.J."/>
            <person name="Misra M."/>
            <person name="Moseman B.L."/>
            <person name="Mundt M."/>
            <person name="Munk A.C."/>
            <person name="Okinaka R.T."/>
            <person name="Parson-Quintana B."/>
            <person name="Reilly L.P."/>
            <person name="Richardson P."/>
            <person name="Robinson D.L."/>
            <person name="Rubin E."/>
            <person name="Saunders E."/>
            <person name="Tapia R."/>
            <person name="Tesmer J.G."/>
            <person name="Thayer N."/>
            <person name="Thompson L.S."/>
            <person name="Tice H."/>
            <person name="Ticknor L.O."/>
            <person name="Wills P.L."/>
            <person name="Brettin T.S."/>
            <person name="Gilna P."/>
        </authorList>
    </citation>
    <scope>NUCLEOTIDE SEQUENCE [LARGE SCALE GENOMIC DNA]</scope>
    <source>
        <strain>ZK / E33L</strain>
    </source>
</reference>